<reference key="1">
    <citation type="submission" date="2007-02" db="EMBL/GenBank/DDBJ databases">
        <title>Complete sequence of chromosome of Yersinia pestis Pestoides F.</title>
        <authorList>
            <consortium name="US DOE Joint Genome Institute"/>
            <person name="Copeland A."/>
            <person name="Lucas S."/>
            <person name="Lapidus A."/>
            <person name="Barry K."/>
            <person name="Detter J.C."/>
            <person name="Glavina del Rio T."/>
            <person name="Hammon N."/>
            <person name="Israni S."/>
            <person name="Dalin E."/>
            <person name="Tice H."/>
            <person name="Pitluck S."/>
            <person name="Di Bartolo G."/>
            <person name="Chain P."/>
            <person name="Malfatti S."/>
            <person name="Shin M."/>
            <person name="Vergez L."/>
            <person name="Schmutz J."/>
            <person name="Larimer F."/>
            <person name="Land M."/>
            <person name="Hauser L."/>
            <person name="Worsham P."/>
            <person name="Chu M."/>
            <person name="Bearden S."/>
            <person name="Garcia E."/>
            <person name="Richardson P."/>
        </authorList>
    </citation>
    <scope>NUCLEOTIDE SEQUENCE [LARGE SCALE GENOMIC DNA]</scope>
    <source>
        <strain>Pestoides F</strain>
    </source>
</reference>
<dbReference type="EC" id="4.6.1.12" evidence="1"/>
<dbReference type="EMBL" id="CP000668">
    <property type="protein sequence ID" value="ABP41360.1"/>
    <property type="molecule type" value="Genomic_DNA"/>
</dbReference>
<dbReference type="RefSeq" id="WP_002209392.1">
    <property type="nucleotide sequence ID" value="NZ_CP009715.1"/>
</dbReference>
<dbReference type="SMR" id="A4TPZ8"/>
<dbReference type="GeneID" id="96664269"/>
<dbReference type="KEGG" id="ypp:YPDSF_3000"/>
<dbReference type="PATRIC" id="fig|386656.14.peg.1363"/>
<dbReference type="UniPathway" id="UPA00056">
    <property type="reaction ID" value="UER00095"/>
</dbReference>
<dbReference type="GO" id="GO:0008685">
    <property type="term" value="F:2-C-methyl-D-erythritol 2,4-cyclodiphosphate synthase activity"/>
    <property type="evidence" value="ECO:0007669"/>
    <property type="project" value="UniProtKB-UniRule"/>
</dbReference>
<dbReference type="GO" id="GO:0046872">
    <property type="term" value="F:metal ion binding"/>
    <property type="evidence" value="ECO:0007669"/>
    <property type="project" value="UniProtKB-KW"/>
</dbReference>
<dbReference type="GO" id="GO:0019288">
    <property type="term" value="P:isopentenyl diphosphate biosynthetic process, methylerythritol 4-phosphate pathway"/>
    <property type="evidence" value="ECO:0007669"/>
    <property type="project" value="UniProtKB-UniRule"/>
</dbReference>
<dbReference type="GO" id="GO:0016114">
    <property type="term" value="P:terpenoid biosynthetic process"/>
    <property type="evidence" value="ECO:0007669"/>
    <property type="project" value="InterPro"/>
</dbReference>
<dbReference type="CDD" id="cd00554">
    <property type="entry name" value="MECDP_synthase"/>
    <property type="match status" value="1"/>
</dbReference>
<dbReference type="FunFam" id="3.30.1330.50:FF:000001">
    <property type="entry name" value="2-C-methyl-D-erythritol 2,4-cyclodiphosphate synthase"/>
    <property type="match status" value="1"/>
</dbReference>
<dbReference type="Gene3D" id="3.30.1330.50">
    <property type="entry name" value="2-C-methyl-D-erythritol 2,4-cyclodiphosphate synthase"/>
    <property type="match status" value="1"/>
</dbReference>
<dbReference type="HAMAP" id="MF_00107">
    <property type="entry name" value="IspF"/>
    <property type="match status" value="1"/>
</dbReference>
<dbReference type="InterPro" id="IPR003526">
    <property type="entry name" value="MECDP_synthase"/>
</dbReference>
<dbReference type="InterPro" id="IPR020555">
    <property type="entry name" value="MECDP_synthase_CS"/>
</dbReference>
<dbReference type="InterPro" id="IPR036571">
    <property type="entry name" value="MECDP_synthase_sf"/>
</dbReference>
<dbReference type="NCBIfam" id="TIGR00151">
    <property type="entry name" value="ispF"/>
    <property type="match status" value="1"/>
</dbReference>
<dbReference type="PANTHER" id="PTHR43181">
    <property type="entry name" value="2-C-METHYL-D-ERYTHRITOL 2,4-CYCLODIPHOSPHATE SYNTHASE, CHLOROPLASTIC"/>
    <property type="match status" value="1"/>
</dbReference>
<dbReference type="PANTHER" id="PTHR43181:SF1">
    <property type="entry name" value="2-C-METHYL-D-ERYTHRITOL 2,4-CYCLODIPHOSPHATE SYNTHASE, CHLOROPLASTIC"/>
    <property type="match status" value="1"/>
</dbReference>
<dbReference type="Pfam" id="PF02542">
    <property type="entry name" value="YgbB"/>
    <property type="match status" value="1"/>
</dbReference>
<dbReference type="SUPFAM" id="SSF69765">
    <property type="entry name" value="IpsF-like"/>
    <property type="match status" value="1"/>
</dbReference>
<dbReference type="PROSITE" id="PS01350">
    <property type="entry name" value="ISPF"/>
    <property type="match status" value="1"/>
</dbReference>
<gene>
    <name evidence="1" type="primary">ispF</name>
    <name type="ordered locus">YPDSF_3000</name>
</gene>
<keyword id="KW-0414">Isoprene biosynthesis</keyword>
<keyword id="KW-0456">Lyase</keyword>
<keyword id="KW-0479">Metal-binding</keyword>
<evidence type="ECO:0000255" key="1">
    <source>
        <dbReference type="HAMAP-Rule" id="MF_00107"/>
    </source>
</evidence>
<name>ISPF_YERPP</name>
<protein>
    <recommendedName>
        <fullName evidence="1">2-C-methyl-D-erythritol 2,4-cyclodiphosphate synthase</fullName>
        <shortName evidence="1">MECDP-synthase</shortName>
        <shortName evidence="1">MECPP-synthase</shortName>
        <shortName evidence="1">MECPS</shortName>
        <ecNumber evidence="1">4.6.1.12</ecNumber>
    </recommendedName>
</protein>
<proteinExistence type="inferred from homology"/>
<organism>
    <name type="scientific">Yersinia pestis (strain Pestoides F)</name>
    <dbReference type="NCBI Taxonomy" id="386656"/>
    <lineage>
        <taxon>Bacteria</taxon>
        <taxon>Pseudomonadati</taxon>
        <taxon>Pseudomonadota</taxon>
        <taxon>Gammaproteobacteria</taxon>
        <taxon>Enterobacterales</taxon>
        <taxon>Yersiniaceae</taxon>
        <taxon>Yersinia</taxon>
    </lineage>
</organism>
<accession>A4TPZ8</accession>
<sequence length="162" mass="17182">MRIGHGFDVHKFGENGSGPLIIGGVRIPYEKGLLAHSDGDVALHAATDALLGAAALGDIGKLFPDTDPAFKGADSRGLLREAYRRILAKGYKLGNLDITIIAQAPKMAPHIPQMRVNLAEDLQCHMDDINVKATTTEQLGFTGRGEGIACEAVVLLVNVEQG</sequence>
<comment type="function">
    <text evidence="1">Involved in the biosynthesis of isopentenyl diphosphate (IPP) and dimethylallyl diphosphate (DMAPP), two major building blocks of isoprenoid compounds. Catalyzes the conversion of 4-diphosphocytidyl-2-C-methyl-D-erythritol 2-phosphate (CDP-ME2P) to 2-C-methyl-D-erythritol 2,4-cyclodiphosphate (ME-CPP) with a corresponding release of cytidine 5-monophosphate (CMP).</text>
</comment>
<comment type="catalytic activity">
    <reaction evidence="1">
        <text>4-CDP-2-C-methyl-D-erythritol 2-phosphate = 2-C-methyl-D-erythritol 2,4-cyclic diphosphate + CMP</text>
        <dbReference type="Rhea" id="RHEA:23864"/>
        <dbReference type="ChEBI" id="CHEBI:57919"/>
        <dbReference type="ChEBI" id="CHEBI:58483"/>
        <dbReference type="ChEBI" id="CHEBI:60377"/>
        <dbReference type="EC" id="4.6.1.12"/>
    </reaction>
</comment>
<comment type="cofactor">
    <cofactor evidence="1">
        <name>a divalent metal cation</name>
        <dbReference type="ChEBI" id="CHEBI:60240"/>
    </cofactor>
    <text evidence="1">Binds 1 divalent metal cation per subunit.</text>
</comment>
<comment type="pathway">
    <text evidence="1">Isoprenoid biosynthesis; isopentenyl diphosphate biosynthesis via DXP pathway; isopentenyl diphosphate from 1-deoxy-D-xylulose 5-phosphate: step 4/6.</text>
</comment>
<comment type="subunit">
    <text evidence="1">Homotrimer.</text>
</comment>
<comment type="similarity">
    <text evidence="1">Belongs to the IspF family.</text>
</comment>
<feature type="chain" id="PRO_1000022895" description="2-C-methyl-D-erythritol 2,4-cyclodiphosphate synthase">
    <location>
        <begin position="1"/>
        <end position="162"/>
    </location>
</feature>
<feature type="binding site" evidence="1">
    <location>
        <begin position="8"/>
        <end position="10"/>
    </location>
    <ligand>
        <name>4-CDP-2-C-methyl-D-erythritol 2-phosphate</name>
        <dbReference type="ChEBI" id="CHEBI:57919"/>
    </ligand>
</feature>
<feature type="binding site" evidence="1">
    <location>
        <position position="8"/>
    </location>
    <ligand>
        <name>a divalent metal cation</name>
        <dbReference type="ChEBI" id="CHEBI:60240"/>
    </ligand>
</feature>
<feature type="binding site" evidence="1">
    <location>
        <position position="10"/>
    </location>
    <ligand>
        <name>a divalent metal cation</name>
        <dbReference type="ChEBI" id="CHEBI:60240"/>
    </ligand>
</feature>
<feature type="binding site" evidence="1">
    <location>
        <begin position="36"/>
        <end position="37"/>
    </location>
    <ligand>
        <name>4-CDP-2-C-methyl-D-erythritol 2-phosphate</name>
        <dbReference type="ChEBI" id="CHEBI:57919"/>
    </ligand>
</feature>
<feature type="binding site" evidence="1">
    <location>
        <position position="44"/>
    </location>
    <ligand>
        <name>a divalent metal cation</name>
        <dbReference type="ChEBI" id="CHEBI:60240"/>
    </ligand>
</feature>
<feature type="binding site" evidence="1">
    <location>
        <begin position="58"/>
        <end position="60"/>
    </location>
    <ligand>
        <name>4-CDP-2-C-methyl-D-erythritol 2-phosphate</name>
        <dbReference type="ChEBI" id="CHEBI:57919"/>
    </ligand>
</feature>
<feature type="binding site" evidence="1">
    <location>
        <begin position="63"/>
        <end position="67"/>
    </location>
    <ligand>
        <name>4-CDP-2-C-methyl-D-erythritol 2-phosphate</name>
        <dbReference type="ChEBI" id="CHEBI:57919"/>
    </ligand>
</feature>
<feature type="binding site" evidence="1">
    <location>
        <begin position="102"/>
        <end position="108"/>
    </location>
    <ligand>
        <name>4-CDP-2-C-methyl-D-erythritol 2-phosphate</name>
        <dbReference type="ChEBI" id="CHEBI:57919"/>
    </ligand>
</feature>
<feature type="binding site" evidence="1">
    <location>
        <begin position="134"/>
        <end position="137"/>
    </location>
    <ligand>
        <name>4-CDP-2-C-methyl-D-erythritol 2-phosphate</name>
        <dbReference type="ChEBI" id="CHEBI:57919"/>
    </ligand>
</feature>
<feature type="binding site" evidence="1">
    <location>
        <position position="141"/>
    </location>
    <ligand>
        <name>4-CDP-2-C-methyl-D-erythritol 2-phosphate</name>
        <dbReference type="ChEBI" id="CHEBI:57919"/>
    </ligand>
</feature>
<feature type="binding site" evidence="1">
    <location>
        <position position="144"/>
    </location>
    <ligand>
        <name>4-CDP-2-C-methyl-D-erythritol 2-phosphate</name>
        <dbReference type="ChEBI" id="CHEBI:57919"/>
    </ligand>
</feature>
<feature type="site" description="Transition state stabilizer" evidence="1">
    <location>
        <position position="36"/>
    </location>
</feature>
<feature type="site" description="Transition state stabilizer" evidence="1">
    <location>
        <position position="135"/>
    </location>
</feature>